<sequence length="496" mass="53581">MSTTTQNIPWYRHLNRAQWRAFSAAWLGYLLDGFDFVLIALVLTEVQGEFGLTTVQAASLISAAFISRWFGGLMLGAMGDRYGRRLAMVTSIVLFSAGTLACGFAPGYITMFIARLVIGMGMAGEYGSSATYVIESWPKHLRNKASGFLISGFSVGAVVAAQVYSLVVPVWGWRALFFIGILPIIFALWLRKNIPEAEDWKEKHAGKAPVRTMVDILYRGEHRIANIVMTLAAATALWFCFAGNLQNAAIVAVLGLLCAAIFISFMVQSTGKRWPTGVMLMVVVLFAFLYSWPIQALLPTYLKTDLAYNPHTVANVLFFSGFGAAVGCCVGGFLGDWLGTRKAYVCSLLASQLLIIPVFAIGGANVWVLGLLLFFQQMLGQGIAGILPKLIGGYFDTDQRAAGLGFTYNVGALGGALAPIIGALIAQRLDLGTALASLSFSLTFVVILLIGLDMPSRVQRWLRPEALRTHDAIDGKPFSGAVPFGSAKNDLVKTKS</sequence>
<name>NANT_SHIF8</name>
<keyword id="KW-0997">Cell inner membrane</keyword>
<keyword id="KW-1003">Cell membrane</keyword>
<keyword id="KW-0472">Membrane</keyword>
<keyword id="KW-0762">Sugar transport</keyword>
<keyword id="KW-0812">Transmembrane</keyword>
<keyword id="KW-1133">Transmembrane helix</keyword>
<keyword id="KW-0813">Transport</keyword>
<evidence type="ECO:0000255" key="1">
    <source>
        <dbReference type="HAMAP-Rule" id="MF_01238"/>
    </source>
</evidence>
<proteinExistence type="inferred from homology"/>
<dbReference type="EMBL" id="CP000266">
    <property type="protein sequence ID" value="ABF05299.1"/>
    <property type="molecule type" value="Genomic_DNA"/>
</dbReference>
<dbReference type="RefSeq" id="WP_000108459.1">
    <property type="nucleotide sequence ID" value="NC_008258.1"/>
</dbReference>
<dbReference type="SMR" id="Q0T066"/>
<dbReference type="GeneID" id="75206074"/>
<dbReference type="KEGG" id="sfv:SFV_3249"/>
<dbReference type="HOGENOM" id="CLU_001265_46_8_6"/>
<dbReference type="Proteomes" id="UP000000659">
    <property type="component" value="Chromosome"/>
</dbReference>
<dbReference type="GO" id="GO:0005886">
    <property type="term" value="C:plasma membrane"/>
    <property type="evidence" value="ECO:0007669"/>
    <property type="project" value="UniProtKB-SubCell"/>
</dbReference>
<dbReference type="GO" id="GO:0046943">
    <property type="term" value="F:carboxylic acid transmembrane transporter activity"/>
    <property type="evidence" value="ECO:0007669"/>
    <property type="project" value="TreeGrafter"/>
</dbReference>
<dbReference type="GO" id="GO:0015538">
    <property type="term" value="F:sialic acid:proton symporter activity"/>
    <property type="evidence" value="ECO:0007669"/>
    <property type="project" value="UniProtKB-UniRule"/>
</dbReference>
<dbReference type="CDD" id="cd17316">
    <property type="entry name" value="MFS_SV2_like"/>
    <property type="match status" value="1"/>
</dbReference>
<dbReference type="FunFam" id="1.20.1250.20:FF:000027">
    <property type="entry name" value="Sialic acid transporter NanT"/>
    <property type="match status" value="1"/>
</dbReference>
<dbReference type="FunFam" id="1.20.1250.20:FF:000038">
    <property type="entry name" value="Sialic acid transporter NanT"/>
    <property type="match status" value="1"/>
</dbReference>
<dbReference type="Gene3D" id="1.20.1250.20">
    <property type="entry name" value="MFS general substrate transporter like domains"/>
    <property type="match status" value="2"/>
</dbReference>
<dbReference type="HAMAP" id="MF_01238">
    <property type="entry name" value="MFS_NanT"/>
    <property type="match status" value="1"/>
</dbReference>
<dbReference type="InterPro" id="IPR011701">
    <property type="entry name" value="MFS"/>
</dbReference>
<dbReference type="InterPro" id="IPR020846">
    <property type="entry name" value="MFS_dom"/>
</dbReference>
<dbReference type="InterPro" id="IPR036259">
    <property type="entry name" value="MFS_trans_sf"/>
</dbReference>
<dbReference type="InterPro" id="IPR004742">
    <property type="entry name" value="SA_transporter"/>
</dbReference>
<dbReference type="NCBIfam" id="TIGR00891">
    <property type="entry name" value="2A0112"/>
    <property type="match status" value="1"/>
</dbReference>
<dbReference type="NCBIfam" id="NF003024">
    <property type="entry name" value="PRK03893.1"/>
    <property type="match status" value="1"/>
</dbReference>
<dbReference type="PANTHER" id="PTHR23508">
    <property type="entry name" value="CARBOXYLIC ACID TRANSPORTER PROTEIN HOMOLOG"/>
    <property type="match status" value="1"/>
</dbReference>
<dbReference type="PANTHER" id="PTHR23508:SF3">
    <property type="entry name" value="SIALIC ACID TRANSPORTER NANT"/>
    <property type="match status" value="1"/>
</dbReference>
<dbReference type="Pfam" id="PF07690">
    <property type="entry name" value="MFS_1"/>
    <property type="match status" value="1"/>
</dbReference>
<dbReference type="SUPFAM" id="SSF103473">
    <property type="entry name" value="MFS general substrate transporter"/>
    <property type="match status" value="1"/>
</dbReference>
<dbReference type="PROSITE" id="PS50850">
    <property type="entry name" value="MFS"/>
    <property type="match status" value="1"/>
</dbReference>
<gene>
    <name evidence="1" type="primary">nanT</name>
    <name type="ordered locus">SFV_3249</name>
</gene>
<protein>
    <recommendedName>
        <fullName evidence="1">Sialic acid transporter NanT</fullName>
    </recommendedName>
    <alternativeName>
        <fullName evidence="1">Sialic acid permease</fullName>
    </alternativeName>
    <alternativeName>
        <fullName evidence="1">Sialic acid/H(+) symporter</fullName>
    </alternativeName>
</protein>
<comment type="function">
    <text evidence="1">Catalyzes the proton-dependent transport of sialic acid.</text>
</comment>
<comment type="catalytic activity">
    <reaction evidence="1">
        <text>N-acetylneuraminate(in) + H(+)(in) = N-acetylneuraminate(out) + H(+)(out)</text>
        <dbReference type="Rhea" id="RHEA:28987"/>
        <dbReference type="ChEBI" id="CHEBI:15378"/>
        <dbReference type="ChEBI" id="CHEBI:35418"/>
    </reaction>
</comment>
<comment type="subcellular location">
    <subcellularLocation>
        <location evidence="1">Cell inner membrane</location>
        <topology evidence="1">Multi-pass membrane protein</topology>
    </subcellularLocation>
</comment>
<comment type="similarity">
    <text evidence="1">Belongs to the major facilitator superfamily. Sialate:H(+) symporter (SHS) (TC 2.A.1.12) family.</text>
</comment>
<feature type="chain" id="PRO_1000214069" description="Sialic acid transporter NanT">
    <location>
        <begin position="1"/>
        <end position="496"/>
    </location>
</feature>
<feature type="transmembrane region" description="Helical" evidence="1">
    <location>
        <begin position="22"/>
        <end position="42"/>
    </location>
</feature>
<feature type="transmembrane region" description="Helical" evidence="1">
    <location>
        <begin position="58"/>
        <end position="78"/>
    </location>
</feature>
<feature type="transmembrane region" description="Helical" evidence="1">
    <location>
        <begin position="92"/>
        <end position="112"/>
    </location>
</feature>
<feature type="transmembrane region" description="Helical" evidence="1">
    <location>
        <begin position="116"/>
        <end position="136"/>
    </location>
</feature>
<feature type="transmembrane region" description="Helical" evidence="1">
    <location>
        <begin position="148"/>
        <end position="168"/>
    </location>
</feature>
<feature type="transmembrane region" description="Helical" evidence="1">
    <location>
        <begin position="170"/>
        <end position="190"/>
    </location>
</feature>
<feature type="transmembrane region" description="Helical" evidence="1">
    <location>
        <begin position="224"/>
        <end position="244"/>
    </location>
</feature>
<feature type="transmembrane region" description="Helical" evidence="1">
    <location>
        <begin position="247"/>
        <end position="267"/>
    </location>
</feature>
<feature type="transmembrane region" description="Helical" evidence="1">
    <location>
        <begin position="278"/>
        <end position="298"/>
    </location>
</feature>
<feature type="transmembrane region" description="Helical" evidence="1">
    <location>
        <begin position="313"/>
        <end position="333"/>
    </location>
</feature>
<feature type="transmembrane region" description="Helical" evidence="1">
    <location>
        <begin position="353"/>
        <end position="375"/>
    </location>
</feature>
<feature type="transmembrane region" description="Helical" evidence="1">
    <location>
        <begin position="406"/>
        <end position="426"/>
    </location>
</feature>
<feature type="transmembrane region" description="Helical" evidence="1">
    <location>
        <begin position="431"/>
        <end position="451"/>
    </location>
</feature>
<organism>
    <name type="scientific">Shigella flexneri serotype 5b (strain 8401)</name>
    <dbReference type="NCBI Taxonomy" id="373384"/>
    <lineage>
        <taxon>Bacteria</taxon>
        <taxon>Pseudomonadati</taxon>
        <taxon>Pseudomonadota</taxon>
        <taxon>Gammaproteobacteria</taxon>
        <taxon>Enterobacterales</taxon>
        <taxon>Enterobacteriaceae</taxon>
        <taxon>Shigella</taxon>
    </lineage>
</organism>
<reference key="1">
    <citation type="journal article" date="2006" name="BMC Genomics">
        <title>Complete genome sequence of Shigella flexneri 5b and comparison with Shigella flexneri 2a.</title>
        <authorList>
            <person name="Nie H."/>
            <person name="Yang F."/>
            <person name="Zhang X."/>
            <person name="Yang J."/>
            <person name="Chen L."/>
            <person name="Wang J."/>
            <person name="Xiong Z."/>
            <person name="Peng J."/>
            <person name="Sun L."/>
            <person name="Dong J."/>
            <person name="Xue Y."/>
            <person name="Xu X."/>
            <person name="Chen S."/>
            <person name="Yao Z."/>
            <person name="Shen Y."/>
            <person name="Jin Q."/>
        </authorList>
    </citation>
    <scope>NUCLEOTIDE SEQUENCE [LARGE SCALE GENOMIC DNA]</scope>
    <source>
        <strain>8401</strain>
    </source>
</reference>
<accession>Q0T066</accession>